<accession>A0A3G3C7U9</accession>
<keyword id="KW-0027">Amidation</keyword>
<keyword id="KW-0165">Cleavage on pair of basic residues</keyword>
<keyword id="KW-0903">Direct protein sequencing</keyword>
<keyword id="KW-1015">Disulfide bond</keyword>
<keyword id="KW-0379">Hydroxylation</keyword>
<keyword id="KW-0872">Ion channel impairing toxin</keyword>
<keyword id="KW-0528">Neurotoxin</keyword>
<keyword id="KW-0964">Secreted</keyword>
<keyword id="KW-0732">Signal</keyword>
<keyword id="KW-0800">Toxin</keyword>
<keyword id="KW-0738">Voltage-gated sodium channel impairing toxin</keyword>
<protein>
    <recommendedName>
        <fullName evidence="7">Mu-conotoxin-like Am3.4</fullName>
    </recommendedName>
    <alternativeName>
        <fullName evidence="6">Conotoxin Ama1805</fullName>
    </alternativeName>
    <alternativeName>
        <fullName evidence="6">Conotoxin Ama1821</fullName>
    </alternativeName>
</protein>
<organism>
    <name type="scientific">Conus amadis</name>
    <name type="common">Amadis cone</name>
    <dbReference type="NCBI Taxonomy" id="198732"/>
    <lineage>
        <taxon>Eukaryota</taxon>
        <taxon>Metazoa</taxon>
        <taxon>Spiralia</taxon>
        <taxon>Lophotrochozoa</taxon>
        <taxon>Mollusca</taxon>
        <taxon>Gastropoda</taxon>
        <taxon>Caenogastropoda</taxon>
        <taxon>Neogastropoda</taxon>
        <taxon>Conoidea</taxon>
        <taxon>Conidae</taxon>
        <taxon>Conus</taxon>
        <taxon>Leptoconus</taxon>
    </lineage>
</organism>
<comment type="function">
    <text evidence="2">Mu-conotoxins block voltage-gated sodium channels (Nav).</text>
</comment>
<comment type="subcellular location">
    <subcellularLocation>
        <location evidence="4 5">Secreted</location>
    </subcellularLocation>
</comment>
<comment type="tissue specificity">
    <text evidence="8 9">Expressed by the venom duct.</text>
</comment>
<comment type="domain">
    <text evidence="7">The cysteine framework is III (CC-C-C-CC). Classified in the M-2 branch, since 2 residues stand between the fourth and the fifth cysteine residues.</text>
</comment>
<comment type="PTM">
    <text evidence="7">Contains 3 disulfide bonds.</text>
</comment>
<comment type="mass spectrometry" mass="1805.6" method="MALDI" evidence="5"/>
<comment type="mass spectrometry" mass="1821.6" method="MALDI" evidence="5">
    <text>with hydroxyPro-67.</text>
</comment>
<comment type="similarity">
    <text evidence="7">Belongs to the conotoxin M superfamily.</text>
</comment>
<evidence type="ECO:0000250" key="1">
    <source>
        <dbReference type="UniProtKB" id="P0CI24"/>
    </source>
</evidence>
<evidence type="ECO:0000250" key="2">
    <source>
        <dbReference type="UniProtKB" id="P58927"/>
    </source>
</evidence>
<evidence type="ECO:0000255" key="3"/>
<evidence type="ECO:0000269" key="4">
    <source>
    </source>
</evidence>
<evidence type="ECO:0000269" key="5">
    <source>
    </source>
</evidence>
<evidence type="ECO:0000303" key="6">
    <source>
    </source>
</evidence>
<evidence type="ECO:0000305" key="7"/>
<evidence type="ECO:0000305" key="8">
    <source>
    </source>
</evidence>
<evidence type="ECO:0000305" key="9">
    <source>
    </source>
</evidence>
<reference key="1">
    <citation type="journal article" date="2019" name="J. Proteomics">
        <title>Cone snail prolyl-4-hydroxylase alpha-subunit sequences derived from transcriptomic data and mass spectrometric analysis of variable proline hydroxylation in C. amadis venom.</title>
        <authorList>
            <person name="Vijayasarathy M."/>
            <person name="Balaram P."/>
        </authorList>
    </citation>
    <scope>NUCLEOTIDE SEQUENCE [MRNA]</scope>
    <scope>PROTEIN SEQUENCE OF 54-69</scope>
    <scope>SUBCELLULAR LOCATION</scope>
    <scope>IDENTIFICATION BY MASS SPECTROMETRY</scope>
    <scope>PARTIAL HYDROXYLATION AT PRO-67</scope>
    <scope>AMIDATION AT CYS-69</scope>
    <source>
        <tissue>Venom</tissue>
        <tissue>Venom duct</tissue>
    </source>
</reference>
<reference key="2">
    <citation type="journal article" date="2019" name="Protein Pept. Lett.">
        <title>Proteome based de novo sequencing of novel conotoxins from marine molluscivorous cone snail Conus amadis and neurological activities of its natural venom in zebrafish model.</title>
        <authorList>
            <person name="Rajesh R.P."/>
            <person name="Franklin J.B."/>
            <person name="Badsha I."/>
            <person name="Arjun P."/>
            <person name="Jain R.P."/>
            <person name="Vignesh M.S."/>
            <person name="Kannan R.R."/>
        </authorList>
    </citation>
    <scope>PROTEIN SEQUENCE OF 54-69</scope>
    <scope>SUBCELLULAR LOCATION</scope>
    <scope>MASS SPECTROMETRY</scope>
    <scope>PARTIAL HYDROXYLATION AT PRO-67</scope>
    <scope>AMIDATION AT CYS-69</scope>
    <source>
        <tissue>Venom</tissue>
    </source>
</reference>
<dbReference type="EMBL" id="MH282820">
    <property type="protein sequence ID" value="AYP73027.1"/>
    <property type="molecule type" value="mRNA"/>
</dbReference>
<dbReference type="GO" id="GO:0005576">
    <property type="term" value="C:extracellular region"/>
    <property type="evidence" value="ECO:0007669"/>
    <property type="project" value="UniProtKB-SubCell"/>
</dbReference>
<dbReference type="GO" id="GO:0008200">
    <property type="term" value="F:ion channel inhibitor activity"/>
    <property type="evidence" value="ECO:0007669"/>
    <property type="project" value="InterPro"/>
</dbReference>
<dbReference type="GO" id="GO:0017080">
    <property type="term" value="F:sodium channel regulator activity"/>
    <property type="evidence" value="ECO:0007669"/>
    <property type="project" value="UniProtKB-KW"/>
</dbReference>
<dbReference type="GO" id="GO:0090729">
    <property type="term" value="F:toxin activity"/>
    <property type="evidence" value="ECO:0007669"/>
    <property type="project" value="UniProtKB-KW"/>
</dbReference>
<dbReference type="InterPro" id="IPR004214">
    <property type="entry name" value="Conotoxin"/>
</dbReference>
<dbReference type="Pfam" id="PF02950">
    <property type="entry name" value="Conotoxin"/>
    <property type="match status" value="1"/>
</dbReference>
<proteinExistence type="evidence at protein level"/>
<name>CM34_CONAA</name>
<sequence length="70" mass="8015">MMYKLGVLLIICLLLFPLTAVPQDGDQPADRPAERMQDDISFEHDRFFDPVKRCCKYGWTCWLGCSPCCG</sequence>
<feature type="signal peptide" evidence="3">
    <location>
        <begin position="1"/>
        <end position="20"/>
    </location>
</feature>
<feature type="propeptide" id="PRO_0000453593" evidence="8">
    <location>
        <begin position="21"/>
        <end position="53"/>
    </location>
</feature>
<feature type="peptide" id="PRO_5018251283" description="Mu-conotoxin-like Am3.4" evidence="4 5">
    <location>
        <begin position="54"/>
        <end position="69"/>
    </location>
</feature>
<feature type="modified residue" description="4-hydroxyproline; partial; in major form" evidence="4 5">
    <location>
        <position position="67"/>
    </location>
</feature>
<feature type="modified residue" description="Cysteine amide" evidence="4 5">
    <location>
        <position position="69"/>
    </location>
</feature>
<feature type="disulfide bond" evidence="1">
    <location>
        <begin position="54"/>
        <end position="69"/>
    </location>
</feature>
<feature type="disulfide bond" evidence="1">
    <location>
        <begin position="55"/>
        <end position="65"/>
    </location>
</feature>
<feature type="disulfide bond" evidence="1">
    <location>
        <begin position="61"/>
        <end position="68"/>
    </location>
</feature>